<gene>
    <name type="primary">yqjU</name>
    <name type="ordered locus">BSU23740</name>
</gene>
<accession>P54558</accession>
<dbReference type="EMBL" id="D84432">
    <property type="protein sequence ID" value="BAA12627.1"/>
    <property type="status" value="ALT_INIT"/>
    <property type="molecule type" value="Genomic_DNA"/>
</dbReference>
<dbReference type="EMBL" id="AL009126">
    <property type="protein sequence ID" value="CAB14306.2"/>
    <property type="molecule type" value="Genomic_DNA"/>
</dbReference>
<dbReference type="PIR" id="E69965">
    <property type="entry name" value="E69965"/>
</dbReference>
<dbReference type="RefSeq" id="NP_390255.1">
    <property type="nucleotide sequence ID" value="NC_000964.3"/>
</dbReference>
<dbReference type="RefSeq" id="WP_004398585.1">
    <property type="nucleotide sequence ID" value="NZ_OZ025638.1"/>
</dbReference>
<dbReference type="SMR" id="P54558"/>
<dbReference type="FunCoup" id="P54558">
    <property type="interactions" value="15"/>
</dbReference>
<dbReference type="STRING" id="224308.BSU23740"/>
<dbReference type="PaxDb" id="224308-BSU23740"/>
<dbReference type="EnsemblBacteria" id="CAB14306">
    <property type="protein sequence ID" value="CAB14306"/>
    <property type="gene ID" value="BSU_23740"/>
</dbReference>
<dbReference type="GeneID" id="938702"/>
<dbReference type="KEGG" id="bsu:BSU23740"/>
<dbReference type="PATRIC" id="fig|224308.179.peg.2587"/>
<dbReference type="InParanoid" id="P54558"/>
<dbReference type="BioCyc" id="BSUB:BSU23740-MONOMER"/>
<dbReference type="Proteomes" id="UP000001570">
    <property type="component" value="Chromosome"/>
</dbReference>
<dbReference type="GO" id="GO:0016020">
    <property type="term" value="C:membrane"/>
    <property type="evidence" value="ECO:0007669"/>
    <property type="project" value="UniProtKB-SubCell"/>
</dbReference>
<protein>
    <recommendedName>
        <fullName>Uncharacterized protein YqjU</fullName>
    </recommendedName>
</protein>
<evidence type="ECO:0000255" key="1"/>
<evidence type="ECO:0000305" key="2"/>
<feature type="chain" id="PRO_0000049835" description="Uncharacterized protein YqjU">
    <location>
        <begin position="1"/>
        <end position="52"/>
    </location>
</feature>
<feature type="transmembrane region" description="Helical" evidence="1">
    <location>
        <begin position="7"/>
        <end position="27"/>
    </location>
</feature>
<comment type="subcellular location">
    <subcellularLocation>
        <location evidence="2">Membrane</location>
        <topology evidence="2">Single-pass membrane protein</topology>
    </subcellularLocation>
</comment>
<comment type="sequence caution" evidence="2">
    <conflict type="erroneous initiation">
        <sequence resource="EMBL-CDS" id="BAA12627"/>
    </conflict>
    <text>Extended N-terminus.</text>
</comment>
<name>YQJU_BACSU</name>
<sequence length="52" mass="5951">MNIGDVMFQLFVFIIFAAVVFAAVTGFKYAKNRKAQLDRIEKKLNSLSEDHD</sequence>
<proteinExistence type="predicted"/>
<organism>
    <name type="scientific">Bacillus subtilis (strain 168)</name>
    <dbReference type="NCBI Taxonomy" id="224308"/>
    <lineage>
        <taxon>Bacteria</taxon>
        <taxon>Bacillati</taxon>
        <taxon>Bacillota</taxon>
        <taxon>Bacilli</taxon>
        <taxon>Bacillales</taxon>
        <taxon>Bacillaceae</taxon>
        <taxon>Bacillus</taxon>
    </lineage>
</organism>
<reference key="1">
    <citation type="journal article" date="1996" name="Microbiology">
        <title>Systematic sequencing of the 283 kb 210 degrees-232 degrees region of the Bacillus subtilis genome containing the skin element and many sporulation genes.</title>
        <authorList>
            <person name="Mizuno M."/>
            <person name="Masuda S."/>
            <person name="Takemaru K."/>
            <person name="Hosono S."/>
            <person name="Sato T."/>
            <person name="Takeuchi M."/>
            <person name="Kobayashi Y."/>
        </authorList>
    </citation>
    <scope>NUCLEOTIDE SEQUENCE [GENOMIC DNA]</scope>
    <source>
        <strain>168 / JH642</strain>
    </source>
</reference>
<reference key="2">
    <citation type="journal article" date="1997" name="Nature">
        <title>The complete genome sequence of the Gram-positive bacterium Bacillus subtilis.</title>
        <authorList>
            <person name="Kunst F."/>
            <person name="Ogasawara N."/>
            <person name="Moszer I."/>
            <person name="Albertini A.M."/>
            <person name="Alloni G."/>
            <person name="Azevedo V."/>
            <person name="Bertero M.G."/>
            <person name="Bessieres P."/>
            <person name="Bolotin A."/>
            <person name="Borchert S."/>
            <person name="Borriss R."/>
            <person name="Boursier L."/>
            <person name="Brans A."/>
            <person name="Braun M."/>
            <person name="Brignell S.C."/>
            <person name="Bron S."/>
            <person name="Brouillet S."/>
            <person name="Bruschi C.V."/>
            <person name="Caldwell B."/>
            <person name="Capuano V."/>
            <person name="Carter N.M."/>
            <person name="Choi S.-K."/>
            <person name="Codani J.-J."/>
            <person name="Connerton I.F."/>
            <person name="Cummings N.J."/>
            <person name="Daniel R.A."/>
            <person name="Denizot F."/>
            <person name="Devine K.M."/>
            <person name="Duesterhoeft A."/>
            <person name="Ehrlich S.D."/>
            <person name="Emmerson P.T."/>
            <person name="Entian K.-D."/>
            <person name="Errington J."/>
            <person name="Fabret C."/>
            <person name="Ferrari E."/>
            <person name="Foulger D."/>
            <person name="Fritz C."/>
            <person name="Fujita M."/>
            <person name="Fujita Y."/>
            <person name="Fuma S."/>
            <person name="Galizzi A."/>
            <person name="Galleron N."/>
            <person name="Ghim S.-Y."/>
            <person name="Glaser P."/>
            <person name="Goffeau A."/>
            <person name="Golightly E.J."/>
            <person name="Grandi G."/>
            <person name="Guiseppi G."/>
            <person name="Guy B.J."/>
            <person name="Haga K."/>
            <person name="Haiech J."/>
            <person name="Harwood C.R."/>
            <person name="Henaut A."/>
            <person name="Hilbert H."/>
            <person name="Holsappel S."/>
            <person name="Hosono S."/>
            <person name="Hullo M.-F."/>
            <person name="Itaya M."/>
            <person name="Jones L.-M."/>
            <person name="Joris B."/>
            <person name="Karamata D."/>
            <person name="Kasahara Y."/>
            <person name="Klaerr-Blanchard M."/>
            <person name="Klein C."/>
            <person name="Kobayashi Y."/>
            <person name="Koetter P."/>
            <person name="Koningstein G."/>
            <person name="Krogh S."/>
            <person name="Kumano M."/>
            <person name="Kurita K."/>
            <person name="Lapidus A."/>
            <person name="Lardinois S."/>
            <person name="Lauber J."/>
            <person name="Lazarevic V."/>
            <person name="Lee S.-M."/>
            <person name="Levine A."/>
            <person name="Liu H."/>
            <person name="Masuda S."/>
            <person name="Mauel C."/>
            <person name="Medigue C."/>
            <person name="Medina N."/>
            <person name="Mellado R.P."/>
            <person name="Mizuno M."/>
            <person name="Moestl D."/>
            <person name="Nakai S."/>
            <person name="Noback M."/>
            <person name="Noone D."/>
            <person name="O'Reilly M."/>
            <person name="Ogawa K."/>
            <person name="Ogiwara A."/>
            <person name="Oudega B."/>
            <person name="Park S.-H."/>
            <person name="Parro V."/>
            <person name="Pohl T.M."/>
            <person name="Portetelle D."/>
            <person name="Porwollik S."/>
            <person name="Prescott A.M."/>
            <person name="Presecan E."/>
            <person name="Pujic P."/>
            <person name="Purnelle B."/>
            <person name="Rapoport G."/>
            <person name="Rey M."/>
            <person name="Reynolds S."/>
            <person name="Rieger M."/>
            <person name="Rivolta C."/>
            <person name="Rocha E."/>
            <person name="Roche B."/>
            <person name="Rose M."/>
            <person name="Sadaie Y."/>
            <person name="Sato T."/>
            <person name="Scanlan E."/>
            <person name="Schleich S."/>
            <person name="Schroeter R."/>
            <person name="Scoffone F."/>
            <person name="Sekiguchi J."/>
            <person name="Sekowska A."/>
            <person name="Seror S.J."/>
            <person name="Serror P."/>
            <person name="Shin B.-S."/>
            <person name="Soldo B."/>
            <person name="Sorokin A."/>
            <person name="Tacconi E."/>
            <person name="Takagi T."/>
            <person name="Takahashi H."/>
            <person name="Takemaru K."/>
            <person name="Takeuchi M."/>
            <person name="Tamakoshi A."/>
            <person name="Tanaka T."/>
            <person name="Terpstra P."/>
            <person name="Tognoni A."/>
            <person name="Tosato V."/>
            <person name="Uchiyama S."/>
            <person name="Vandenbol M."/>
            <person name="Vannier F."/>
            <person name="Vassarotti A."/>
            <person name="Viari A."/>
            <person name="Wambutt R."/>
            <person name="Wedler E."/>
            <person name="Wedler H."/>
            <person name="Weitzenegger T."/>
            <person name="Winters P."/>
            <person name="Wipat A."/>
            <person name="Yamamoto H."/>
            <person name="Yamane K."/>
            <person name="Yasumoto K."/>
            <person name="Yata K."/>
            <person name="Yoshida K."/>
            <person name="Yoshikawa H.-F."/>
            <person name="Zumstein E."/>
            <person name="Yoshikawa H."/>
            <person name="Danchin A."/>
        </authorList>
    </citation>
    <scope>NUCLEOTIDE SEQUENCE [LARGE SCALE GENOMIC DNA]</scope>
    <source>
        <strain>168</strain>
    </source>
</reference>
<keyword id="KW-0472">Membrane</keyword>
<keyword id="KW-1185">Reference proteome</keyword>
<keyword id="KW-0812">Transmembrane</keyword>
<keyword id="KW-1133">Transmembrane helix</keyword>